<feature type="chain" id="PRO_0000360145" description="Tryptophan 2,3-dioxygenase">
    <location>
        <begin position="1"/>
        <end position="297"/>
    </location>
</feature>
<feature type="binding site" evidence="1">
    <location>
        <begin position="51"/>
        <end position="55"/>
    </location>
    <ligand>
        <name>substrate</name>
    </ligand>
</feature>
<feature type="binding site" evidence="1">
    <location>
        <position position="113"/>
    </location>
    <ligand>
        <name>substrate</name>
    </ligand>
</feature>
<feature type="binding site" evidence="1">
    <location>
        <position position="117"/>
    </location>
    <ligand>
        <name>substrate</name>
    </ligand>
</feature>
<feature type="binding site" description="axial binding residue" evidence="1">
    <location>
        <position position="240"/>
    </location>
    <ligand>
        <name>heme</name>
        <dbReference type="ChEBI" id="CHEBI:30413"/>
    </ligand>
    <ligandPart>
        <name>Fe</name>
        <dbReference type="ChEBI" id="CHEBI:18248"/>
    </ligandPart>
</feature>
<feature type="binding site" evidence="1">
    <location>
        <position position="254"/>
    </location>
    <ligand>
        <name>substrate</name>
    </ligand>
</feature>
<sequence length="297" mass="34503">MPVDKNLRDLEPGIHTDLEGRLTYGGYLRLDQLLSAQQPLSEPAHHDEMLFIIQHQTSELWLKLLAHELRAAIVHLQHDEVWQCRKVLARSKQVLRQLTEQWSVLETLTPSEYMGFRDVLGPSSGFQSLQYRYIEFLLGNKNPQVLQVFAYDPQGRARLREVLEAPSLYEEFLRYLARFGHAIPQQYHARDWTVAHVADDTLRPVFERIYENTDRYWREYALCEDLVDVETQFQLWRFRHMRTVMRVIGFKRGTGGSSGVGFLQQALALTFFPELFDVRTSVGVDSRPPQGAADTQG</sequence>
<proteinExistence type="inferred from homology"/>
<comment type="function">
    <text evidence="1">Heme-dependent dioxygenase that catalyzes the oxidative cleavage of the L-tryptophan (L-Trp) pyrrole ring and converts L-tryptophan to N-formyl-L-kynurenine. Catalyzes the oxidative cleavage of the indole moiety.</text>
</comment>
<comment type="catalytic activity">
    <reaction evidence="1">
        <text>L-tryptophan + O2 = N-formyl-L-kynurenine</text>
        <dbReference type="Rhea" id="RHEA:24536"/>
        <dbReference type="ChEBI" id="CHEBI:15379"/>
        <dbReference type="ChEBI" id="CHEBI:57912"/>
        <dbReference type="ChEBI" id="CHEBI:58629"/>
        <dbReference type="EC" id="1.13.11.11"/>
    </reaction>
</comment>
<comment type="cofactor">
    <cofactor evidence="1">
        <name>heme</name>
        <dbReference type="ChEBI" id="CHEBI:30413"/>
    </cofactor>
    <text evidence="1">Binds 1 heme group per subunit.</text>
</comment>
<comment type="pathway">
    <text evidence="1">Amino-acid degradation; L-tryptophan degradation via kynurenine pathway; L-kynurenine from L-tryptophan: step 1/2.</text>
</comment>
<comment type="subunit">
    <text evidence="1">Homotetramer.</text>
</comment>
<comment type="similarity">
    <text evidence="1">Belongs to the tryptophan 2,3-dioxygenase family.</text>
</comment>
<protein>
    <recommendedName>
        <fullName evidence="1">Tryptophan 2,3-dioxygenase</fullName>
        <shortName evidence="1">TDO</shortName>
        <ecNumber evidence="1">1.13.11.11</ecNumber>
    </recommendedName>
    <alternativeName>
        <fullName evidence="1">Tryptamin 2,3-dioxygenase</fullName>
    </alternativeName>
    <alternativeName>
        <fullName evidence="1">Tryptophan oxygenase</fullName>
        <shortName evidence="1">TO</shortName>
        <shortName evidence="1">TRPO</shortName>
    </alternativeName>
    <alternativeName>
        <fullName evidence="1">Tryptophan pyrrolase</fullName>
    </alternativeName>
    <alternativeName>
        <fullName evidence="1">Tryptophanase</fullName>
    </alternativeName>
</protein>
<keyword id="KW-0223">Dioxygenase</keyword>
<keyword id="KW-0349">Heme</keyword>
<keyword id="KW-0408">Iron</keyword>
<keyword id="KW-0479">Metal-binding</keyword>
<keyword id="KW-0560">Oxidoreductase</keyword>
<keyword id="KW-0823">Tryptophan catabolism</keyword>
<evidence type="ECO:0000255" key="1">
    <source>
        <dbReference type="HAMAP-Rule" id="MF_01972"/>
    </source>
</evidence>
<gene>
    <name evidence="1" type="primary">kynA</name>
    <name type="ordered locus">PXO_04220</name>
</gene>
<accession>B2SM13</accession>
<organism>
    <name type="scientific">Xanthomonas oryzae pv. oryzae (strain PXO99A)</name>
    <dbReference type="NCBI Taxonomy" id="360094"/>
    <lineage>
        <taxon>Bacteria</taxon>
        <taxon>Pseudomonadati</taxon>
        <taxon>Pseudomonadota</taxon>
        <taxon>Gammaproteobacteria</taxon>
        <taxon>Lysobacterales</taxon>
        <taxon>Lysobacteraceae</taxon>
        <taxon>Xanthomonas</taxon>
    </lineage>
</organism>
<name>T23O_XANOP</name>
<dbReference type="EC" id="1.13.11.11" evidence="1"/>
<dbReference type="EMBL" id="CP000967">
    <property type="protein sequence ID" value="ACD57429.1"/>
    <property type="molecule type" value="Genomic_DNA"/>
</dbReference>
<dbReference type="RefSeq" id="WP_011260428.1">
    <property type="nucleotide sequence ID" value="NC_010717.2"/>
</dbReference>
<dbReference type="SMR" id="B2SM13"/>
<dbReference type="KEGG" id="xop:PXO_04220"/>
<dbReference type="eggNOG" id="COG3483">
    <property type="taxonomic scope" value="Bacteria"/>
</dbReference>
<dbReference type="HOGENOM" id="CLU_063240_0_0_6"/>
<dbReference type="UniPathway" id="UPA00333">
    <property type="reaction ID" value="UER00453"/>
</dbReference>
<dbReference type="Proteomes" id="UP000001740">
    <property type="component" value="Chromosome"/>
</dbReference>
<dbReference type="GO" id="GO:0020037">
    <property type="term" value="F:heme binding"/>
    <property type="evidence" value="ECO:0000250"/>
    <property type="project" value="UniProtKB"/>
</dbReference>
<dbReference type="GO" id="GO:0046872">
    <property type="term" value="F:metal ion binding"/>
    <property type="evidence" value="ECO:0007669"/>
    <property type="project" value="UniProtKB-KW"/>
</dbReference>
<dbReference type="GO" id="GO:0004833">
    <property type="term" value="F:tryptophan 2,3-dioxygenase activity"/>
    <property type="evidence" value="ECO:0000250"/>
    <property type="project" value="UniProtKB"/>
</dbReference>
<dbReference type="GO" id="GO:0019442">
    <property type="term" value="P:L-tryptophan catabolic process to acetyl-CoA"/>
    <property type="evidence" value="ECO:0007669"/>
    <property type="project" value="TreeGrafter"/>
</dbReference>
<dbReference type="GO" id="GO:0019441">
    <property type="term" value="P:L-tryptophan catabolic process to kynurenine"/>
    <property type="evidence" value="ECO:0000250"/>
    <property type="project" value="UniProtKB"/>
</dbReference>
<dbReference type="FunFam" id="1.20.58.480:FF:000001">
    <property type="entry name" value="Tryptophan 2,3-dioxygenase"/>
    <property type="match status" value="1"/>
</dbReference>
<dbReference type="Gene3D" id="1.20.58.480">
    <property type="match status" value="1"/>
</dbReference>
<dbReference type="HAMAP" id="MF_01972">
    <property type="entry name" value="T23O"/>
    <property type="match status" value="1"/>
</dbReference>
<dbReference type="InterPro" id="IPR037217">
    <property type="entry name" value="Trp/Indoleamine_2_3_dOase-like"/>
</dbReference>
<dbReference type="InterPro" id="IPR004981">
    <property type="entry name" value="Trp_2_3_dOase"/>
</dbReference>
<dbReference type="PANTHER" id="PTHR10138">
    <property type="entry name" value="TRYPTOPHAN 2,3-DIOXYGENASE"/>
    <property type="match status" value="1"/>
</dbReference>
<dbReference type="PANTHER" id="PTHR10138:SF0">
    <property type="entry name" value="TRYPTOPHAN 2,3-DIOXYGENASE"/>
    <property type="match status" value="1"/>
</dbReference>
<dbReference type="Pfam" id="PF03301">
    <property type="entry name" value="Trp_dioxygenase"/>
    <property type="match status" value="2"/>
</dbReference>
<dbReference type="SUPFAM" id="SSF140959">
    <property type="entry name" value="Indolic compounds 2,3-dioxygenase-like"/>
    <property type="match status" value="1"/>
</dbReference>
<reference key="1">
    <citation type="journal article" date="2008" name="BMC Genomics">
        <title>Genome sequence and rapid evolution of the rice pathogen Xanthomonas oryzae pv. oryzae PXO99A.</title>
        <authorList>
            <person name="Salzberg S.L."/>
            <person name="Sommer D.D."/>
            <person name="Schatz M.C."/>
            <person name="Phillippy A.M."/>
            <person name="Rabinowicz P.D."/>
            <person name="Tsuge S."/>
            <person name="Furutani A."/>
            <person name="Ochiai H."/>
            <person name="Delcher A.L."/>
            <person name="Kelley D."/>
            <person name="Madupu R."/>
            <person name="Puiu D."/>
            <person name="Radune D."/>
            <person name="Shumway M."/>
            <person name="Trapnell C."/>
            <person name="Aparna G."/>
            <person name="Jha G."/>
            <person name="Pandey A."/>
            <person name="Patil P.B."/>
            <person name="Ishihara H."/>
            <person name="Meyer D.F."/>
            <person name="Szurek B."/>
            <person name="Verdier V."/>
            <person name="Koebnik R."/>
            <person name="Dow J.M."/>
            <person name="Ryan R.P."/>
            <person name="Hirata H."/>
            <person name="Tsuyumu S."/>
            <person name="Won Lee S."/>
            <person name="Seo Y.-S."/>
            <person name="Sriariyanum M."/>
            <person name="Ronald P.C."/>
            <person name="Sonti R.V."/>
            <person name="Van Sluys M.-A."/>
            <person name="Leach J.E."/>
            <person name="White F.F."/>
            <person name="Bogdanove A.J."/>
        </authorList>
    </citation>
    <scope>NUCLEOTIDE SEQUENCE [LARGE SCALE GENOMIC DNA]</scope>
    <source>
        <strain>PXO99A</strain>
    </source>
</reference>